<sequence length="184" mass="21444">MNRESDWLWVEPIMGSRRVSNFCWAAILLFGALGFFFVGISSYFGKDLIPFLSSQQILFVPQGVVMCFYGIAGLFLSFYLWCTIFWNVGSGYNKFDKKKKIVSLFRWGFPGENRRICINFFMKDIQGIRMEVQEGIYPRRTLYMKIKGQQDIPLTRIRENLTLGEIEEKAAELARFLRVSIEGL</sequence>
<reference key="1">
    <citation type="journal article" date="2003" name="Nucleic Acids Res.">
        <title>Complete chloroplast DNA sequence of the moss Physcomitrella patens: evidence for the loss and relocation of rpoA from the chloroplast to the nucleus.</title>
        <authorList>
            <person name="Sugiura C."/>
            <person name="Kobayashi Y."/>
            <person name="Setsuyuki A."/>
            <person name="Sugita C."/>
            <person name="Sugita M."/>
        </authorList>
    </citation>
    <scope>NUCLEOTIDE SEQUENCE [LARGE SCALE GENOMIC DNA]</scope>
    <source>
        <strain>cv. Gransden 2004</strain>
    </source>
</reference>
<dbReference type="EMBL" id="AP005672">
    <property type="protein sequence ID" value="BAC85041.1"/>
    <property type="molecule type" value="Genomic_DNA"/>
</dbReference>
<dbReference type="RefSeq" id="NP_904191.1">
    <property type="nucleotide sequence ID" value="NC_005087.2"/>
</dbReference>
<dbReference type="RefSeq" id="YP_009477521.1">
    <property type="nucleotide sequence ID" value="NC_037465.1"/>
</dbReference>
<dbReference type="FunCoup" id="Q6YXR4">
    <property type="interactions" value="120"/>
</dbReference>
<dbReference type="STRING" id="3218.Q6YXR4"/>
<dbReference type="GeneID" id="2546699"/>
<dbReference type="GeneID" id="36487135"/>
<dbReference type="KEGG" id="ppp:2546699"/>
<dbReference type="InParanoid" id="Q6YXR4"/>
<dbReference type="OrthoDB" id="1287926at2759"/>
<dbReference type="Proteomes" id="UP000006727">
    <property type="component" value="Chloroplast"/>
</dbReference>
<dbReference type="GO" id="GO:0009535">
    <property type="term" value="C:chloroplast thylakoid membrane"/>
    <property type="evidence" value="ECO:0007669"/>
    <property type="project" value="UniProtKB-SubCell"/>
</dbReference>
<dbReference type="GO" id="GO:0009522">
    <property type="term" value="C:photosystem I"/>
    <property type="evidence" value="ECO:0007669"/>
    <property type="project" value="InterPro"/>
</dbReference>
<dbReference type="GO" id="GO:0015979">
    <property type="term" value="P:photosynthesis"/>
    <property type="evidence" value="ECO:0007669"/>
    <property type="project" value="UniProtKB-UniRule"/>
</dbReference>
<dbReference type="HAMAP" id="MF_00437">
    <property type="entry name" value="Ycf4"/>
    <property type="match status" value="1"/>
</dbReference>
<dbReference type="InterPro" id="IPR003359">
    <property type="entry name" value="PSI_Ycf4_assembly"/>
</dbReference>
<dbReference type="NCBIfam" id="NF002712">
    <property type="entry name" value="PRK02542.1"/>
    <property type="match status" value="1"/>
</dbReference>
<dbReference type="PANTHER" id="PTHR33288">
    <property type="match status" value="1"/>
</dbReference>
<dbReference type="PANTHER" id="PTHR33288:SF4">
    <property type="entry name" value="PHOTOSYSTEM I ASSEMBLY PROTEIN YCF4"/>
    <property type="match status" value="1"/>
</dbReference>
<dbReference type="Pfam" id="PF02392">
    <property type="entry name" value="Ycf4"/>
    <property type="match status" value="1"/>
</dbReference>
<geneLocation type="chloroplast"/>
<protein>
    <recommendedName>
        <fullName evidence="1">Photosystem I assembly protein Ycf4</fullName>
    </recommendedName>
</protein>
<proteinExistence type="inferred from homology"/>
<evidence type="ECO:0000255" key="1">
    <source>
        <dbReference type="HAMAP-Rule" id="MF_00437"/>
    </source>
</evidence>
<organism>
    <name type="scientific">Physcomitrium patens</name>
    <name type="common">Spreading-leaved earth moss</name>
    <name type="synonym">Physcomitrella patens</name>
    <dbReference type="NCBI Taxonomy" id="3218"/>
    <lineage>
        <taxon>Eukaryota</taxon>
        <taxon>Viridiplantae</taxon>
        <taxon>Streptophyta</taxon>
        <taxon>Embryophyta</taxon>
        <taxon>Bryophyta</taxon>
        <taxon>Bryophytina</taxon>
        <taxon>Bryopsida</taxon>
        <taxon>Funariidae</taxon>
        <taxon>Funariales</taxon>
        <taxon>Funariaceae</taxon>
        <taxon>Physcomitrium</taxon>
    </lineage>
</organism>
<gene>
    <name evidence="1" type="primary">ycf4</name>
</gene>
<keyword id="KW-0150">Chloroplast</keyword>
<keyword id="KW-0472">Membrane</keyword>
<keyword id="KW-0602">Photosynthesis</keyword>
<keyword id="KW-0934">Plastid</keyword>
<keyword id="KW-1185">Reference proteome</keyword>
<keyword id="KW-0793">Thylakoid</keyword>
<keyword id="KW-0812">Transmembrane</keyword>
<keyword id="KW-1133">Transmembrane helix</keyword>
<name>YCF4_PHYPA</name>
<accession>Q6YXR4</accession>
<comment type="function">
    <text evidence="1">Seems to be required for the assembly of the photosystem I complex.</text>
</comment>
<comment type="subcellular location">
    <subcellularLocation>
        <location evidence="1">Plastid</location>
        <location evidence="1">Chloroplast thylakoid membrane</location>
        <topology evidence="1">Multi-pass membrane protein</topology>
    </subcellularLocation>
</comment>
<comment type="similarity">
    <text evidence="1">Belongs to the Ycf4 family.</text>
</comment>
<feature type="chain" id="PRO_0000217621" description="Photosystem I assembly protein Ycf4">
    <location>
        <begin position="1"/>
        <end position="184"/>
    </location>
</feature>
<feature type="transmembrane region" description="Helical" evidence="1">
    <location>
        <begin position="21"/>
        <end position="43"/>
    </location>
</feature>
<feature type="transmembrane region" description="Helical" evidence="1">
    <location>
        <begin position="68"/>
        <end position="90"/>
    </location>
</feature>